<sequence length="204" mass="22643">MLRIAIAKGRLMDSLINYLDVIEYTTLSETLKNRERQLLLSVDNIECILVKGSDVPIYVEQGMADIGIVGSDILDERQYNVNNLLNMPFGACHFAVAAKPETTNYRKIATSYVHTAETYFKSKGIDVELIKLNGSVELACVVDMVDGIVDIVQTGTTLKANGLVEKQHISDINARLITNKAAYFKKSQLIEQFIRSLEVSIANA</sequence>
<gene>
    <name evidence="1" type="primary">hisG</name>
    <name type="ordered locus">SACOL2703</name>
</gene>
<reference key="1">
    <citation type="journal article" date="2005" name="J. Bacteriol.">
        <title>Insights on evolution of virulence and resistance from the complete genome analysis of an early methicillin-resistant Staphylococcus aureus strain and a biofilm-producing methicillin-resistant Staphylococcus epidermidis strain.</title>
        <authorList>
            <person name="Gill S.R."/>
            <person name="Fouts D.E."/>
            <person name="Archer G.L."/>
            <person name="Mongodin E.F."/>
            <person name="DeBoy R.T."/>
            <person name="Ravel J."/>
            <person name="Paulsen I.T."/>
            <person name="Kolonay J.F."/>
            <person name="Brinkac L.M."/>
            <person name="Beanan M.J."/>
            <person name="Dodson R.J."/>
            <person name="Daugherty S.C."/>
            <person name="Madupu R."/>
            <person name="Angiuoli S.V."/>
            <person name="Durkin A.S."/>
            <person name="Haft D.H."/>
            <person name="Vamathevan J.J."/>
            <person name="Khouri H."/>
            <person name="Utterback T.R."/>
            <person name="Lee C."/>
            <person name="Dimitrov G."/>
            <person name="Jiang L."/>
            <person name="Qin H."/>
            <person name="Weidman J."/>
            <person name="Tran K."/>
            <person name="Kang K.H."/>
            <person name="Hance I.R."/>
            <person name="Nelson K.E."/>
            <person name="Fraser C.M."/>
        </authorList>
    </citation>
    <scope>NUCLEOTIDE SEQUENCE [LARGE SCALE GENOMIC DNA]</scope>
    <source>
        <strain>COL</strain>
    </source>
</reference>
<protein>
    <recommendedName>
        <fullName evidence="1">ATP phosphoribosyltransferase</fullName>
        <shortName evidence="1">ATP-PRT</shortName>
        <shortName evidence="1">ATP-PRTase</shortName>
        <ecNumber evidence="1">2.4.2.17</ecNumber>
    </recommendedName>
</protein>
<feature type="chain" id="PRO_0000151931" description="ATP phosphoribosyltransferase">
    <location>
        <begin position="1"/>
        <end position="204"/>
    </location>
</feature>
<dbReference type="EC" id="2.4.2.17" evidence="1"/>
<dbReference type="EMBL" id="CP000046">
    <property type="protein sequence ID" value="AAW37351.1"/>
    <property type="molecule type" value="Genomic_DNA"/>
</dbReference>
<dbReference type="RefSeq" id="WP_000944149.1">
    <property type="nucleotide sequence ID" value="NZ_JBGOFO010000001.1"/>
</dbReference>
<dbReference type="SMR" id="Q5HCL8"/>
<dbReference type="KEGG" id="sac:SACOL2703"/>
<dbReference type="HOGENOM" id="CLU_038115_2_0_9"/>
<dbReference type="UniPathway" id="UPA00031">
    <property type="reaction ID" value="UER00006"/>
</dbReference>
<dbReference type="Proteomes" id="UP000000530">
    <property type="component" value="Chromosome"/>
</dbReference>
<dbReference type="GO" id="GO:0005737">
    <property type="term" value="C:cytoplasm"/>
    <property type="evidence" value="ECO:0007669"/>
    <property type="project" value="UniProtKB-SubCell"/>
</dbReference>
<dbReference type="GO" id="GO:0005524">
    <property type="term" value="F:ATP binding"/>
    <property type="evidence" value="ECO:0007669"/>
    <property type="project" value="UniProtKB-KW"/>
</dbReference>
<dbReference type="GO" id="GO:0003879">
    <property type="term" value="F:ATP phosphoribosyltransferase activity"/>
    <property type="evidence" value="ECO:0007669"/>
    <property type="project" value="UniProtKB-UniRule"/>
</dbReference>
<dbReference type="GO" id="GO:0000105">
    <property type="term" value="P:L-histidine biosynthetic process"/>
    <property type="evidence" value="ECO:0007669"/>
    <property type="project" value="UniProtKB-UniRule"/>
</dbReference>
<dbReference type="CDD" id="cd13595">
    <property type="entry name" value="PBP2_HisGs"/>
    <property type="match status" value="1"/>
</dbReference>
<dbReference type="FunFam" id="3.40.190.10:FF:000008">
    <property type="entry name" value="ATP phosphoribosyltransferase"/>
    <property type="match status" value="1"/>
</dbReference>
<dbReference type="Gene3D" id="3.40.190.10">
    <property type="entry name" value="Periplasmic binding protein-like II"/>
    <property type="match status" value="2"/>
</dbReference>
<dbReference type="HAMAP" id="MF_01018">
    <property type="entry name" value="HisG_Short"/>
    <property type="match status" value="1"/>
</dbReference>
<dbReference type="InterPro" id="IPR013820">
    <property type="entry name" value="ATP_PRibTrfase_cat"/>
</dbReference>
<dbReference type="InterPro" id="IPR001348">
    <property type="entry name" value="ATP_PRibTrfase_HisG"/>
</dbReference>
<dbReference type="InterPro" id="IPR024893">
    <property type="entry name" value="ATP_PRibTrfase_HisG_short"/>
</dbReference>
<dbReference type="NCBIfam" id="TIGR00070">
    <property type="entry name" value="hisG"/>
    <property type="match status" value="1"/>
</dbReference>
<dbReference type="PANTHER" id="PTHR21403:SF8">
    <property type="entry name" value="ATP PHOSPHORIBOSYLTRANSFERASE"/>
    <property type="match status" value="1"/>
</dbReference>
<dbReference type="PANTHER" id="PTHR21403">
    <property type="entry name" value="ATP PHOSPHORIBOSYLTRANSFERASE ATP-PRTASE"/>
    <property type="match status" value="1"/>
</dbReference>
<dbReference type="Pfam" id="PF01634">
    <property type="entry name" value="HisG"/>
    <property type="match status" value="1"/>
</dbReference>
<dbReference type="SUPFAM" id="SSF53850">
    <property type="entry name" value="Periplasmic binding protein-like II"/>
    <property type="match status" value="1"/>
</dbReference>
<organism>
    <name type="scientific">Staphylococcus aureus (strain COL)</name>
    <dbReference type="NCBI Taxonomy" id="93062"/>
    <lineage>
        <taxon>Bacteria</taxon>
        <taxon>Bacillati</taxon>
        <taxon>Bacillota</taxon>
        <taxon>Bacilli</taxon>
        <taxon>Bacillales</taxon>
        <taxon>Staphylococcaceae</taxon>
        <taxon>Staphylococcus</taxon>
    </lineage>
</organism>
<name>HIS1_STAAC</name>
<evidence type="ECO:0000255" key="1">
    <source>
        <dbReference type="HAMAP-Rule" id="MF_01018"/>
    </source>
</evidence>
<keyword id="KW-0028">Amino-acid biosynthesis</keyword>
<keyword id="KW-0067">ATP-binding</keyword>
<keyword id="KW-0963">Cytoplasm</keyword>
<keyword id="KW-0328">Glycosyltransferase</keyword>
<keyword id="KW-0368">Histidine biosynthesis</keyword>
<keyword id="KW-0547">Nucleotide-binding</keyword>
<keyword id="KW-0808">Transferase</keyword>
<proteinExistence type="inferred from homology"/>
<comment type="function">
    <text evidence="1">Catalyzes the condensation of ATP and 5-phosphoribose 1-diphosphate to form N'-(5'-phosphoribosyl)-ATP (PR-ATP). Has a crucial role in the pathway because the rate of histidine biosynthesis seems to be controlled primarily by regulation of HisG enzymatic activity.</text>
</comment>
<comment type="catalytic activity">
    <reaction evidence="1">
        <text>1-(5-phospho-beta-D-ribosyl)-ATP + diphosphate = 5-phospho-alpha-D-ribose 1-diphosphate + ATP</text>
        <dbReference type="Rhea" id="RHEA:18473"/>
        <dbReference type="ChEBI" id="CHEBI:30616"/>
        <dbReference type="ChEBI" id="CHEBI:33019"/>
        <dbReference type="ChEBI" id="CHEBI:58017"/>
        <dbReference type="ChEBI" id="CHEBI:73183"/>
        <dbReference type="EC" id="2.4.2.17"/>
    </reaction>
</comment>
<comment type="pathway">
    <text evidence="1">Amino-acid biosynthesis; L-histidine biosynthesis; L-histidine from 5-phospho-alpha-D-ribose 1-diphosphate: step 1/9.</text>
</comment>
<comment type="subunit">
    <text evidence="1">Heteromultimer composed of HisG and HisZ subunits.</text>
</comment>
<comment type="subcellular location">
    <subcellularLocation>
        <location evidence="1">Cytoplasm</location>
    </subcellularLocation>
</comment>
<comment type="domain">
    <text>Lacks the C-terminal regulatory region which is replaced by HisZ.</text>
</comment>
<comment type="similarity">
    <text evidence="1">Belongs to the ATP phosphoribosyltransferase family. Short subfamily.</text>
</comment>
<accession>Q5HCL8</accession>